<dbReference type="EMBL" id="AL731593">
    <property type="protein sequence ID" value="CAD40969.2"/>
    <property type="molecule type" value="Genomic_DNA"/>
</dbReference>
<dbReference type="EMBL" id="AP008210">
    <property type="protein sequence ID" value="BAF14813.1"/>
    <property type="molecule type" value="Genomic_DNA"/>
</dbReference>
<dbReference type="EMBL" id="AP014960">
    <property type="protein sequence ID" value="BAS89386.1"/>
    <property type="molecule type" value="Genomic_DNA"/>
</dbReference>
<dbReference type="EMBL" id="CM000141">
    <property type="protein sequence ID" value="EAZ30866.1"/>
    <property type="molecule type" value="Genomic_DNA"/>
</dbReference>
<dbReference type="EMBL" id="AK063700">
    <property type="protein sequence ID" value="BAG88832.1"/>
    <property type="molecule type" value="mRNA"/>
</dbReference>
<dbReference type="RefSeq" id="XP_015633704.1">
    <property type="nucleotide sequence ID" value="XM_015778218.1"/>
</dbReference>
<dbReference type="SMR" id="Q7XUW5"/>
<dbReference type="BioGRID" id="804993">
    <property type="interactions" value="1"/>
</dbReference>
<dbReference type="FunCoup" id="Q7XUW5">
    <property type="interactions" value="464"/>
</dbReference>
<dbReference type="STRING" id="39947.Q7XUW5"/>
<dbReference type="PaxDb" id="39947-Q7XUW5"/>
<dbReference type="EnsemblPlants" id="Os04t0445100-01">
    <property type="protein sequence ID" value="Os04t0445100-01"/>
    <property type="gene ID" value="Os04g0445100"/>
</dbReference>
<dbReference type="Gramene" id="Os04t0445100-01">
    <property type="protein sequence ID" value="Os04t0445100-01"/>
    <property type="gene ID" value="Os04g0445100"/>
</dbReference>
<dbReference type="KEGG" id="dosa:Os04g0445100"/>
<dbReference type="eggNOG" id="KOG0710">
    <property type="taxonomic scope" value="Eukaryota"/>
</dbReference>
<dbReference type="HOGENOM" id="CLU_046737_5_3_1"/>
<dbReference type="InParanoid" id="Q7XUW5"/>
<dbReference type="OMA" id="EMASIMS"/>
<dbReference type="OrthoDB" id="1431247at2759"/>
<dbReference type="Proteomes" id="UP000000763">
    <property type="component" value="Chromosome 4"/>
</dbReference>
<dbReference type="Proteomes" id="UP000007752">
    <property type="component" value="Chromosome 4"/>
</dbReference>
<dbReference type="Proteomes" id="UP000059680">
    <property type="component" value="Chromosome 4"/>
</dbReference>
<dbReference type="GO" id="GO:0005783">
    <property type="term" value="C:endoplasmic reticulum"/>
    <property type="evidence" value="ECO:0007669"/>
    <property type="project" value="UniProtKB-SubCell"/>
</dbReference>
<dbReference type="GO" id="GO:0051082">
    <property type="term" value="F:unfolded protein binding"/>
    <property type="evidence" value="ECO:0000318"/>
    <property type="project" value="GO_Central"/>
</dbReference>
<dbReference type="GO" id="GO:0051259">
    <property type="term" value="P:protein complex oligomerization"/>
    <property type="evidence" value="ECO:0000318"/>
    <property type="project" value="GO_Central"/>
</dbReference>
<dbReference type="GO" id="GO:0006457">
    <property type="term" value="P:protein folding"/>
    <property type="evidence" value="ECO:0000318"/>
    <property type="project" value="GO_Central"/>
</dbReference>
<dbReference type="GO" id="GO:0009408">
    <property type="term" value="P:response to heat"/>
    <property type="evidence" value="ECO:0000270"/>
    <property type="project" value="UniProtKB"/>
</dbReference>
<dbReference type="GO" id="GO:0042542">
    <property type="term" value="P:response to hydrogen peroxide"/>
    <property type="evidence" value="ECO:0000318"/>
    <property type="project" value="GO_Central"/>
</dbReference>
<dbReference type="GO" id="GO:0009651">
    <property type="term" value="P:response to salt stress"/>
    <property type="evidence" value="ECO:0000318"/>
    <property type="project" value="GO_Central"/>
</dbReference>
<dbReference type="CDD" id="cd06472">
    <property type="entry name" value="ACD_ScHsp26_like"/>
    <property type="match status" value="1"/>
</dbReference>
<dbReference type="FunFam" id="2.60.40.790:FF:000035">
    <property type="entry name" value="22.0 kDa heat shock protein"/>
    <property type="match status" value="1"/>
</dbReference>
<dbReference type="Gene3D" id="2.60.40.790">
    <property type="match status" value="1"/>
</dbReference>
<dbReference type="InterPro" id="IPR002068">
    <property type="entry name" value="A-crystallin/Hsp20_dom"/>
</dbReference>
<dbReference type="InterPro" id="IPR007052">
    <property type="entry name" value="CS_dom"/>
</dbReference>
<dbReference type="InterPro" id="IPR008978">
    <property type="entry name" value="HSP20-like_chaperone"/>
</dbReference>
<dbReference type="InterPro" id="IPR031107">
    <property type="entry name" value="Small_HSP"/>
</dbReference>
<dbReference type="PANTHER" id="PTHR11527">
    <property type="entry name" value="HEAT-SHOCK PROTEIN 20 FAMILY MEMBER"/>
    <property type="match status" value="1"/>
</dbReference>
<dbReference type="Pfam" id="PF00011">
    <property type="entry name" value="HSP20"/>
    <property type="match status" value="1"/>
</dbReference>
<dbReference type="SUPFAM" id="SSF49764">
    <property type="entry name" value="HSP20-like chaperones"/>
    <property type="match status" value="1"/>
</dbReference>
<dbReference type="PROSITE" id="PS01031">
    <property type="entry name" value="SHSP"/>
    <property type="match status" value="1"/>
</dbReference>
<protein>
    <recommendedName>
        <fullName>23.2 kDa heat shock protein</fullName>
        <shortName>OsHsp23.2</shortName>
    </recommendedName>
</protein>
<name>HS232_ORYSJ</name>
<reference key="1">
    <citation type="journal article" date="2002" name="Nature">
        <title>Sequence and analysis of rice chromosome 4.</title>
        <authorList>
            <person name="Feng Q."/>
            <person name="Zhang Y."/>
            <person name="Hao P."/>
            <person name="Wang S."/>
            <person name="Fu G."/>
            <person name="Huang Y."/>
            <person name="Li Y."/>
            <person name="Zhu J."/>
            <person name="Liu Y."/>
            <person name="Hu X."/>
            <person name="Jia P."/>
            <person name="Zhang Y."/>
            <person name="Zhao Q."/>
            <person name="Ying K."/>
            <person name="Yu S."/>
            <person name="Tang Y."/>
            <person name="Weng Q."/>
            <person name="Zhang L."/>
            <person name="Lu Y."/>
            <person name="Mu J."/>
            <person name="Lu Y."/>
            <person name="Zhang L.S."/>
            <person name="Yu Z."/>
            <person name="Fan D."/>
            <person name="Liu X."/>
            <person name="Lu T."/>
            <person name="Li C."/>
            <person name="Wu Y."/>
            <person name="Sun T."/>
            <person name="Lei H."/>
            <person name="Li T."/>
            <person name="Hu H."/>
            <person name="Guan J."/>
            <person name="Wu M."/>
            <person name="Zhang R."/>
            <person name="Zhou B."/>
            <person name="Chen Z."/>
            <person name="Chen L."/>
            <person name="Jin Z."/>
            <person name="Wang R."/>
            <person name="Yin H."/>
            <person name="Cai Z."/>
            <person name="Ren S."/>
            <person name="Lv G."/>
            <person name="Gu W."/>
            <person name="Zhu G."/>
            <person name="Tu Y."/>
            <person name="Jia J."/>
            <person name="Zhang Y."/>
            <person name="Chen J."/>
            <person name="Kang H."/>
            <person name="Chen X."/>
            <person name="Shao C."/>
            <person name="Sun Y."/>
            <person name="Hu Q."/>
            <person name="Zhang X."/>
            <person name="Zhang W."/>
            <person name="Wang L."/>
            <person name="Ding C."/>
            <person name="Sheng H."/>
            <person name="Gu J."/>
            <person name="Chen S."/>
            <person name="Ni L."/>
            <person name="Zhu F."/>
            <person name="Chen W."/>
            <person name="Lan L."/>
            <person name="Lai Y."/>
            <person name="Cheng Z."/>
            <person name="Gu M."/>
            <person name="Jiang J."/>
            <person name="Li J."/>
            <person name="Hong G."/>
            <person name="Xue Y."/>
            <person name="Han B."/>
        </authorList>
    </citation>
    <scope>NUCLEOTIDE SEQUENCE [LARGE SCALE GENOMIC DNA]</scope>
    <source>
        <strain>cv. Nipponbare</strain>
    </source>
</reference>
<reference key="2">
    <citation type="journal article" date="2005" name="Nature">
        <title>The map-based sequence of the rice genome.</title>
        <authorList>
            <consortium name="International rice genome sequencing project (IRGSP)"/>
        </authorList>
    </citation>
    <scope>NUCLEOTIDE SEQUENCE [LARGE SCALE GENOMIC DNA]</scope>
    <source>
        <strain>cv. Nipponbare</strain>
    </source>
</reference>
<reference key="3">
    <citation type="journal article" date="2008" name="Nucleic Acids Res.">
        <title>The rice annotation project database (RAP-DB): 2008 update.</title>
        <authorList>
            <consortium name="The rice annotation project (RAP)"/>
        </authorList>
    </citation>
    <scope>GENOME REANNOTATION</scope>
    <source>
        <strain>cv. Nipponbare</strain>
    </source>
</reference>
<reference key="4">
    <citation type="journal article" date="2013" name="Rice">
        <title>Improvement of the Oryza sativa Nipponbare reference genome using next generation sequence and optical map data.</title>
        <authorList>
            <person name="Kawahara Y."/>
            <person name="de la Bastide M."/>
            <person name="Hamilton J.P."/>
            <person name="Kanamori H."/>
            <person name="McCombie W.R."/>
            <person name="Ouyang S."/>
            <person name="Schwartz D.C."/>
            <person name="Tanaka T."/>
            <person name="Wu J."/>
            <person name="Zhou S."/>
            <person name="Childs K.L."/>
            <person name="Davidson R.M."/>
            <person name="Lin H."/>
            <person name="Quesada-Ocampo L."/>
            <person name="Vaillancourt B."/>
            <person name="Sakai H."/>
            <person name="Lee S.S."/>
            <person name="Kim J."/>
            <person name="Numa H."/>
            <person name="Itoh T."/>
            <person name="Buell C.R."/>
            <person name="Matsumoto T."/>
        </authorList>
    </citation>
    <scope>GENOME REANNOTATION</scope>
    <source>
        <strain>cv. Nipponbare</strain>
    </source>
</reference>
<reference key="5">
    <citation type="journal article" date="2005" name="PLoS Biol.">
        <title>The genomes of Oryza sativa: a history of duplications.</title>
        <authorList>
            <person name="Yu J."/>
            <person name="Wang J."/>
            <person name="Lin W."/>
            <person name="Li S."/>
            <person name="Li H."/>
            <person name="Zhou J."/>
            <person name="Ni P."/>
            <person name="Dong W."/>
            <person name="Hu S."/>
            <person name="Zeng C."/>
            <person name="Zhang J."/>
            <person name="Zhang Y."/>
            <person name="Li R."/>
            <person name="Xu Z."/>
            <person name="Li S."/>
            <person name="Li X."/>
            <person name="Zheng H."/>
            <person name="Cong L."/>
            <person name="Lin L."/>
            <person name="Yin J."/>
            <person name="Geng J."/>
            <person name="Li G."/>
            <person name="Shi J."/>
            <person name="Liu J."/>
            <person name="Lv H."/>
            <person name="Li J."/>
            <person name="Wang J."/>
            <person name="Deng Y."/>
            <person name="Ran L."/>
            <person name="Shi X."/>
            <person name="Wang X."/>
            <person name="Wu Q."/>
            <person name="Li C."/>
            <person name="Ren X."/>
            <person name="Wang J."/>
            <person name="Wang X."/>
            <person name="Li D."/>
            <person name="Liu D."/>
            <person name="Zhang X."/>
            <person name="Ji Z."/>
            <person name="Zhao W."/>
            <person name="Sun Y."/>
            <person name="Zhang Z."/>
            <person name="Bao J."/>
            <person name="Han Y."/>
            <person name="Dong L."/>
            <person name="Ji J."/>
            <person name="Chen P."/>
            <person name="Wu S."/>
            <person name="Liu J."/>
            <person name="Xiao Y."/>
            <person name="Bu D."/>
            <person name="Tan J."/>
            <person name="Yang L."/>
            <person name="Ye C."/>
            <person name="Zhang J."/>
            <person name="Xu J."/>
            <person name="Zhou Y."/>
            <person name="Yu Y."/>
            <person name="Zhang B."/>
            <person name="Zhuang S."/>
            <person name="Wei H."/>
            <person name="Liu B."/>
            <person name="Lei M."/>
            <person name="Yu H."/>
            <person name="Li Y."/>
            <person name="Xu H."/>
            <person name="Wei S."/>
            <person name="He X."/>
            <person name="Fang L."/>
            <person name="Zhang Z."/>
            <person name="Zhang Y."/>
            <person name="Huang X."/>
            <person name="Su Z."/>
            <person name="Tong W."/>
            <person name="Li J."/>
            <person name="Tong Z."/>
            <person name="Li S."/>
            <person name="Ye J."/>
            <person name="Wang L."/>
            <person name="Fang L."/>
            <person name="Lei T."/>
            <person name="Chen C.-S."/>
            <person name="Chen H.-C."/>
            <person name="Xu Z."/>
            <person name="Li H."/>
            <person name="Huang H."/>
            <person name="Zhang F."/>
            <person name="Xu H."/>
            <person name="Li N."/>
            <person name="Zhao C."/>
            <person name="Li S."/>
            <person name="Dong L."/>
            <person name="Huang Y."/>
            <person name="Li L."/>
            <person name="Xi Y."/>
            <person name="Qi Q."/>
            <person name="Li W."/>
            <person name="Zhang B."/>
            <person name="Hu W."/>
            <person name="Zhang Y."/>
            <person name="Tian X."/>
            <person name="Jiao Y."/>
            <person name="Liang X."/>
            <person name="Jin J."/>
            <person name="Gao L."/>
            <person name="Zheng W."/>
            <person name="Hao B."/>
            <person name="Liu S.-M."/>
            <person name="Wang W."/>
            <person name="Yuan L."/>
            <person name="Cao M."/>
            <person name="McDermott J."/>
            <person name="Samudrala R."/>
            <person name="Wang J."/>
            <person name="Wong G.K.-S."/>
            <person name="Yang H."/>
        </authorList>
    </citation>
    <scope>NUCLEOTIDE SEQUENCE [LARGE SCALE GENOMIC DNA]</scope>
    <source>
        <strain>cv. Nipponbare</strain>
    </source>
</reference>
<reference key="6">
    <citation type="journal article" date="2003" name="Science">
        <title>Collection, mapping, and annotation of over 28,000 cDNA clones from japonica rice.</title>
        <authorList>
            <consortium name="The rice full-length cDNA consortium"/>
        </authorList>
    </citation>
    <scope>NUCLEOTIDE SEQUENCE [LARGE SCALE MRNA]</scope>
    <source>
        <strain>cv. Nipponbare</strain>
    </source>
</reference>
<reference key="7">
    <citation type="journal article" date="2009" name="BMC Genomics">
        <title>Rice sHsp genes: genomic organization and expression profiling under stress and development.</title>
        <authorList>
            <person name="Sarkar N.K."/>
            <person name="Kim Y.-K."/>
            <person name="Grover A."/>
        </authorList>
    </citation>
    <scope>INDUCTION</scope>
    <scope>GENE FAMILY</scope>
</reference>
<feature type="signal peptide" evidence="1">
    <location>
        <begin position="1"/>
        <end position="27"/>
    </location>
</feature>
<feature type="chain" id="PRO_0000387478" description="23.2 kDa heat shock protein">
    <location>
        <begin position="28"/>
        <end position="215"/>
    </location>
</feature>
<feature type="domain" description="sHSP" evidence="2">
    <location>
        <begin position="69"/>
        <end position="189"/>
    </location>
</feature>
<feature type="region of interest" description="Disordered" evidence="3">
    <location>
        <begin position="183"/>
        <end position="215"/>
    </location>
</feature>
<feature type="compositionally biased region" description="Polar residues" evidence="3">
    <location>
        <begin position="205"/>
        <end position="215"/>
    </location>
</feature>
<comment type="subunit">
    <text>May form oligomeric structures.</text>
</comment>
<comment type="subcellular location">
    <subcellularLocation>
        <location evidence="5">Endoplasmic reticulum</location>
    </subcellularLocation>
</comment>
<comment type="induction">
    <text evidence="4">By heat shock.</text>
</comment>
<comment type="similarity">
    <text evidence="2">Belongs to the small heat shock protein (HSP20) family.</text>
</comment>
<evidence type="ECO:0000255" key="1"/>
<evidence type="ECO:0000255" key="2">
    <source>
        <dbReference type="PROSITE-ProRule" id="PRU00285"/>
    </source>
</evidence>
<evidence type="ECO:0000256" key="3">
    <source>
        <dbReference type="SAM" id="MobiDB-lite"/>
    </source>
</evidence>
<evidence type="ECO:0000269" key="4">
    <source>
    </source>
</evidence>
<evidence type="ECO:0000305" key="5"/>
<gene>
    <name type="primary">HSP23.2</name>
    <name type="ordered locus">Os04g0445100</name>
    <name type="ordered locus">LOC_Os04g36750</name>
    <name type="ORF">OsJ_14939</name>
    <name type="ORF">OSJNBa0027P08.9</name>
</gene>
<accession>Q7XUW5</accession>
<accession>A0A0P0WAP6</accession>
<proteinExistence type="evidence at transcript level"/>
<keyword id="KW-0256">Endoplasmic reticulum</keyword>
<keyword id="KW-1185">Reference proteome</keyword>
<keyword id="KW-0732">Signal</keyword>
<keyword id="KW-0346">Stress response</keyword>
<sequence length="215" mass="23228">MASMRTAAAAAMLACIAVVLASTAADGALLPWFGGGGARDEAVPELGLLAAADPFRILEHVPFGFDRDDVAMLSMARVDWRETGDAHEVVVDVPGMRKEDLRVEVEDNRVLRISGERRREETTEQKGGGDHWHREERSYGRFWRQLRLPDNADLDSIAASLDNGVLTVRFRKLAPDQIKGPRVVGIASAGGDDGGKKSIGGAGEGQNQQAKKVEL</sequence>
<organism>
    <name type="scientific">Oryza sativa subsp. japonica</name>
    <name type="common">Rice</name>
    <dbReference type="NCBI Taxonomy" id="39947"/>
    <lineage>
        <taxon>Eukaryota</taxon>
        <taxon>Viridiplantae</taxon>
        <taxon>Streptophyta</taxon>
        <taxon>Embryophyta</taxon>
        <taxon>Tracheophyta</taxon>
        <taxon>Spermatophyta</taxon>
        <taxon>Magnoliopsida</taxon>
        <taxon>Liliopsida</taxon>
        <taxon>Poales</taxon>
        <taxon>Poaceae</taxon>
        <taxon>BOP clade</taxon>
        <taxon>Oryzoideae</taxon>
        <taxon>Oryzeae</taxon>
        <taxon>Oryzinae</taxon>
        <taxon>Oryza</taxon>
        <taxon>Oryza sativa</taxon>
    </lineage>
</organism>